<accession>A9NC09</accession>
<sequence length="672" mass="77336">MSKAFKLTSKFKPSGDQPQAIEKLVAGLEDGLAYQTLLGVTGSGKTFTIANAIEKVQRPTLILEPNKTLAAQFYAEMREFFPENAVEYFVSYYDYYQPEAYVPSSDTYIEKDASINDHIEQMRLSATKAITERHDTIIIATVSAIYGLGDPDSYLKMLLHLTRGDQIDQRKILQRLAELQYTRNDLELRRATYRVNGDIIDIYPADSEREAVRVELFDDEVENLSYFDPLTGEMLRRVPRITVYPKTHYVTPREKLLSTLDQIKIELKERLSQLEKANKLVERQRLEQRTKFDMEMILELGYCSGIENYSRYLSGRNEGEPPPTLIDYLPKDALLIIDESHVTIPQLGGMYRGDRARKETLVEYGFRLPSALDNRPLRFDEFEKLAPQTIFISATPGPYEEKQSDQVVELLVRPTGLIDPEIEVRPVATQVDDLLSEIKKRAAQNERVLVTTLTKRMAEDLTEYFTEHNVRVRYLHSDIDTVERVEIIRDLRLGVFDVLVGINLLREGLDIPEVSLVAILDADKEGFLRSERSLIQTMGRAARNVHGKAILYADRITDSMKRAMEEAERRRIAQSAYNEKHHITPKSIQKAVTEIIEGARTYTERGRFVNQAQLIAEEEAKYIAMTPKQLAKELRKLEEQMYHHARNLEFEEAAAVRDKIQHIRKGLLEVKE</sequence>
<comment type="function">
    <text evidence="1">The UvrABC repair system catalyzes the recognition and processing of DNA lesions. A damage recognition complex composed of 2 UvrA and 2 UvrB subunits scans DNA for abnormalities. Upon binding of the UvrA(2)B(2) complex to a putative damaged site, the DNA wraps around one UvrB monomer. DNA wrap is dependent on ATP binding by UvrB and probably causes local melting of the DNA helix, facilitating insertion of UvrB beta-hairpin between the DNA strands. Then UvrB probes one DNA strand for the presence of a lesion. If a lesion is found the UvrA subunits dissociate and the UvrB-DNA preincision complex is formed. This complex is subsequently bound by UvrC and the second UvrB is released. If no lesion is found, the DNA wraps around the other UvrB subunit that will check the other stand for damage.</text>
</comment>
<comment type="subunit">
    <text evidence="1">Forms a heterotetramer with UvrA during the search for lesions. Interacts with UvrC in an incision complex.</text>
</comment>
<comment type="subcellular location">
    <subcellularLocation>
        <location evidence="1">Cytoplasm</location>
    </subcellularLocation>
</comment>
<comment type="domain">
    <text evidence="1">The beta-hairpin motif is involved in DNA binding.</text>
</comment>
<comment type="similarity">
    <text evidence="1">Belongs to the UvrB family.</text>
</comment>
<organism>
    <name type="scientific">Coxiella burnetii (strain RSA 331 / Henzerling II)</name>
    <dbReference type="NCBI Taxonomy" id="360115"/>
    <lineage>
        <taxon>Bacteria</taxon>
        <taxon>Pseudomonadati</taxon>
        <taxon>Pseudomonadota</taxon>
        <taxon>Gammaproteobacteria</taxon>
        <taxon>Legionellales</taxon>
        <taxon>Coxiellaceae</taxon>
        <taxon>Coxiella</taxon>
    </lineage>
</organism>
<proteinExistence type="inferred from homology"/>
<evidence type="ECO:0000255" key="1">
    <source>
        <dbReference type="HAMAP-Rule" id="MF_00204"/>
    </source>
</evidence>
<name>UVRB_COXBR</name>
<feature type="chain" id="PRO_1000077883" description="UvrABC system protein B">
    <location>
        <begin position="1"/>
        <end position="672"/>
    </location>
</feature>
<feature type="domain" description="Helicase ATP-binding" evidence="1">
    <location>
        <begin position="26"/>
        <end position="181"/>
    </location>
</feature>
<feature type="domain" description="Helicase C-terminal" evidence="1">
    <location>
        <begin position="430"/>
        <end position="592"/>
    </location>
</feature>
<feature type="domain" description="UVR" evidence="1">
    <location>
        <begin position="631"/>
        <end position="666"/>
    </location>
</feature>
<feature type="short sequence motif" description="Beta-hairpin">
    <location>
        <begin position="92"/>
        <end position="115"/>
    </location>
</feature>
<feature type="binding site" evidence="1">
    <location>
        <begin position="39"/>
        <end position="46"/>
    </location>
    <ligand>
        <name>ATP</name>
        <dbReference type="ChEBI" id="CHEBI:30616"/>
    </ligand>
</feature>
<dbReference type="EMBL" id="CP000890">
    <property type="protein sequence ID" value="ABX77502.1"/>
    <property type="molecule type" value="Genomic_DNA"/>
</dbReference>
<dbReference type="RefSeq" id="WP_010957630.1">
    <property type="nucleotide sequence ID" value="NC_010117.1"/>
</dbReference>
<dbReference type="SMR" id="A9NC09"/>
<dbReference type="KEGG" id="cbs:COXBURSA331_A0631"/>
<dbReference type="HOGENOM" id="CLU_009621_2_1_6"/>
<dbReference type="GO" id="GO:0005737">
    <property type="term" value="C:cytoplasm"/>
    <property type="evidence" value="ECO:0007669"/>
    <property type="project" value="UniProtKB-SubCell"/>
</dbReference>
<dbReference type="GO" id="GO:0009380">
    <property type="term" value="C:excinuclease repair complex"/>
    <property type="evidence" value="ECO:0007669"/>
    <property type="project" value="InterPro"/>
</dbReference>
<dbReference type="GO" id="GO:0005524">
    <property type="term" value="F:ATP binding"/>
    <property type="evidence" value="ECO:0007669"/>
    <property type="project" value="UniProtKB-UniRule"/>
</dbReference>
<dbReference type="GO" id="GO:0016887">
    <property type="term" value="F:ATP hydrolysis activity"/>
    <property type="evidence" value="ECO:0007669"/>
    <property type="project" value="InterPro"/>
</dbReference>
<dbReference type="GO" id="GO:0003677">
    <property type="term" value="F:DNA binding"/>
    <property type="evidence" value="ECO:0007669"/>
    <property type="project" value="UniProtKB-UniRule"/>
</dbReference>
<dbReference type="GO" id="GO:0009381">
    <property type="term" value="F:excinuclease ABC activity"/>
    <property type="evidence" value="ECO:0007669"/>
    <property type="project" value="UniProtKB-UniRule"/>
</dbReference>
<dbReference type="GO" id="GO:0004386">
    <property type="term" value="F:helicase activity"/>
    <property type="evidence" value="ECO:0007669"/>
    <property type="project" value="UniProtKB-KW"/>
</dbReference>
<dbReference type="GO" id="GO:0006289">
    <property type="term" value="P:nucleotide-excision repair"/>
    <property type="evidence" value="ECO:0007669"/>
    <property type="project" value="UniProtKB-UniRule"/>
</dbReference>
<dbReference type="GO" id="GO:0009432">
    <property type="term" value="P:SOS response"/>
    <property type="evidence" value="ECO:0007669"/>
    <property type="project" value="UniProtKB-UniRule"/>
</dbReference>
<dbReference type="CDD" id="cd17916">
    <property type="entry name" value="DEXHc_UvrB"/>
    <property type="match status" value="1"/>
</dbReference>
<dbReference type="CDD" id="cd18790">
    <property type="entry name" value="SF2_C_UvrB"/>
    <property type="match status" value="1"/>
</dbReference>
<dbReference type="FunFam" id="3.40.50.300:FF:000477">
    <property type="entry name" value="UvrABC system protein B"/>
    <property type="match status" value="1"/>
</dbReference>
<dbReference type="Gene3D" id="6.10.140.240">
    <property type="match status" value="1"/>
</dbReference>
<dbReference type="Gene3D" id="3.40.50.300">
    <property type="entry name" value="P-loop containing nucleotide triphosphate hydrolases"/>
    <property type="match status" value="3"/>
</dbReference>
<dbReference type="Gene3D" id="4.10.860.10">
    <property type="entry name" value="UVR domain"/>
    <property type="match status" value="1"/>
</dbReference>
<dbReference type="HAMAP" id="MF_00204">
    <property type="entry name" value="UvrB"/>
    <property type="match status" value="1"/>
</dbReference>
<dbReference type="InterPro" id="IPR006935">
    <property type="entry name" value="Helicase/UvrB_N"/>
</dbReference>
<dbReference type="InterPro" id="IPR014001">
    <property type="entry name" value="Helicase_ATP-bd"/>
</dbReference>
<dbReference type="InterPro" id="IPR001650">
    <property type="entry name" value="Helicase_C-like"/>
</dbReference>
<dbReference type="InterPro" id="IPR027417">
    <property type="entry name" value="P-loop_NTPase"/>
</dbReference>
<dbReference type="InterPro" id="IPR001943">
    <property type="entry name" value="UVR_dom"/>
</dbReference>
<dbReference type="InterPro" id="IPR036876">
    <property type="entry name" value="UVR_dom_sf"/>
</dbReference>
<dbReference type="InterPro" id="IPR004807">
    <property type="entry name" value="UvrB"/>
</dbReference>
<dbReference type="InterPro" id="IPR041471">
    <property type="entry name" value="UvrB_inter"/>
</dbReference>
<dbReference type="InterPro" id="IPR024759">
    <property type="entry name" value="UvrB_YAD/RRR_dom"/>
</dbReference>
<dbReference type="NCBIfam" id="NF003673">
    <property type="entry name" value="PRK05298.1"/>
    <property type="match status" value="1"/>
</dbReference>
<dbReference type="NCBIfam" id="TIGR00631">
    <property type="entry name" value="uvrb"/>
    <property type="match status" value="1"/>
</dbReference>
<dbReference type="PANTHER" id="PTHR24029">
    <property type="entry name" value="UVRABC SYSTEM PROTEIN B"/>
    <property type="match status" value="1"/>
</dbReference>
<dbReference type="PANTHER" id="PTHR24029:SF0">
    <property type="entry name" value="UVRABC SYSTEM PROTEIN B"/>
    <property type="match status" value="1"/>
</dbReference>
<dbReference type="Pfam" id="PF00271">
    <property type="entry name" value="Helicase_C"/>
    <property type="match status" value="1"/>
</dbReference>
<dbReference type="Pfam" id="PF04851">
    <property type="entry name" value="ResIII"/>
    <property type="match status" value="1"/>
</dbReference>
<dbReference type="Pfam" id="PF02151">
    <property type="entry name" value="UVR"/>
    <property type="match status" value="1"/>
</dbReference>
<dbReference type="Pfam" id="PF12344">
    <property type="entry name" value="UvrB"/>
    <property type="match status" value="1"/>
</dbReference>
<dbReference type="Pfam" id="PF17757">
    <property type="entry name" value="UvrB_inter"/>
    <property type="match status" value="1"/>
</dbReference>
<dbReference type="SMART" id="SM00487">
    <property type="entry name" value="DEXDc"/>
    <property type="match status" value="1"/>
</dbReference>
<dbReference type="SMART" id="SM00490">
    <property type="entry name" value="HELICc"/>
    <property type="match status" value="1"/>
</dbReference>
<dbReference type="SUPFAM" id="SSF46600">
    <property type="entry name" value="C-terminal UvrC-binding domain of UvrB"/>
    <property type="match status" value="1"/>
</dbReference>
<dbReference type="SUPFAM" id="SSF52540">
    <property type="entry name" value="P-loop containing nucleoside triphosphate hydrolases"/>
    <property type="match status" value="2"/>
</dbReference>
<dbReference type="PROSITE" id="PS51192">
    <property type="entry name" value="HELICASE_ATP_BIND_1"/>
    <property type="match status" value="1"/>
</dbReference>
<dbReference type="PROSITE" id="PS51194">
    <property type="entry name" value="HELICASE_CTER"/>
    <property type="match status" value="1"/>
</dbReference>
<dbReference type="PROSITE" id="PS50151">
    <property type="entry name" value="UVR"/>
    <property type="match status" value="1"/>
</dbReference>
<reference key="1">
    <citation type="submission" date="2007-11" db="EMBL/GenBank/DDBJ databases">
        <title>Genome sequencing of phylogenetically and phenotypically diverse Coxiella burnetii isolates.</title>
        <authorList>
            <person name="Seshadri R."/>
            <person name="Samuel J.E."/>
        </authorList>
    </citation>
    <scope>NUCLEOTIDE SEQUENCE [LARGE SCALE GENOMIC DNA]</scope>
    <source>
        <strain>RSA 331 / Henzerling II</strain>
    </source>
</reference>
<keyword id="KW-0067">ATP-binding</keyword>
<keyword id="KW-0963">Cytoplasm</keyword>
<keyword id="KW-0227">DNA damage</keyword>
<keyword id="KW-0228">DNA excision</keyword>
<keyword id="KW-0234">DNA repair</keyword>
<keyword id="KW-0267">Excision nuclease</keyword>
<keyword id="KW-0347">Helicase</keyword>
<keyword id="KW-0378">Hydrolase</keyword>
<keyword id="KW-0547">Nucleotide-binding</keyword>
<keyword id="KW-0742">SOS response</keyword>
<protein>
    <recommendedName>
        <fullName evidence="1">UvrABC system protein B</fullName>
        <shortName evidence="1">Protein UvrB</shortName>
    </recommendedName>
    <alternativeName>
        <fullName evidence="1">Excinuclease ABC subunit B</fullName>
    </alternativeName>
</protein>
<gene>
    <name evidence="1" type="primary">uvrB</name>
    <name type="ordered locus">COXBURSA331_A0631</name>
</gene>